<proteinExistence type="inferred from homology"/>
<feature type="chain" id="PRO_1000013399" description="Large ribosomal subunit protein bL34">
    <location>
        <begin position="1"/>
        <end position="45"/>
    </location>
</feature>
<feature type="region of interest" description="Disordered" evidence="2">
    <location>
        <begin position="1"/>
        <end position="45"/>
    </location>
</feature>
<feature type="compositionally biased region" description="Basic residues" evidence="2">
    <location>
        <begin position="10"/>
        <end position="45"/>
    </location>
</feature>
<gene>
    <name evidence="1" type="primary">rpmH</name>
    <name evidence="1" type="synonym">rpl34</name>
    <name type="ordered locus">NATL1_16571</name>
</gene>
<organism>
    <name type="scientific">Prochlorococcus marinus (strain NATL1A)</name>
    <dbReference type="NCBI Taxonomy" id="167555"/>
    <lineage>
        <taxon>Bacteria</taxon>
        <taxon>Bacillati</taxon>
        <taxon>Cyanobacteriota</taxon>
        <taxon>Cyanophyceae</taxon>
        <taxon>Synechococcales</taxon>
        <taxon>Prochlorococcaceae</taxon>
        <taxon>Prochlorococcus</taxon>
    </lineage>
</organism>
<dbReference type="EMBL" id="CP000553">
    <property type="protein sequence ID" value="ABM76214.1"/>
    <property type="molecule type" value="Genomic_DNA"/>
</dbReference>
<dbReference type="RefSeq" id="WP_011294890.1">
    <property type="nucleotide sequence ID" value="NC_008819.1"/>
</dbReference>
<dbReference type="SMR" id="A2C404"/>
<dbReference type="KEGG" id="pme:NATL1_16571"/>
<dbReference type="eggNOG" id="COG0230">
    <property type="taxonomic scope" value="Bacteria"/>
</dbReference>
<dbReference type="HOGENOM" id="CLU_129938_2_1_3"/>
<dbReference type="Proteomes" id="UP000002592">
    <property type="component" value="Chromosome"/>
</dbReference>
<dbReference type="GO" id="GO:1990904">
    <property type="term" value="C:ribonucleoprotein complex"/>
    <property type="evidence" value="ECO:0007669"/>
    <property type="project" value="UniProtKB-KW"/>
</dbReference>
<dbReference type="GO" id="GO:0005840">
    <property type="term" value="C:ribosome"/>
    <property type="evidence" value="ECO:0007669"/>
    <property type="project" value="UniProtKB-KW"/>
</dbReference>
<dbReference type="GO" id="GO:0003735">
    <property type="term" value="F:structural constituent of ribosome"/>
    <property type="evidence" value="ECO:0007669"/>
    <property type="project" value="InterPro"/>
</dbReference>
<dbReference type="GO" id="GO:0006412">
    <property type="term" value="P:translation"/>
    <property type="evidence" value="ECO:0007669"/>
    <property type="project" value="UniProtKB-UniRule"/>
</dbReference>
<dbReference type="Gene3D" id="1.10.287.3980">
    <property type="match status" value="1"/>
</dbReference>
<dbReference type="HAMAP" id="MF_00391">
    <property type="entry name" value="Ribosomal_bL34"/>
    <property type="match status" value="1"/>
</dbReference>
<dbReference type="InterPro" id="IPR000271">
    <property type="entry name" value="Ribosomal_bL34"/>
</dbReference>
<dbReference type="InterPro" id="IPR020939">
    <property type="entry name" value="Ribosomal_bL34_CS"/>
</dbReference>
<dbReference type="NCBIfam" id="TIGR01030">
    <property type="entry name" value="rpmH_bact"/>
    <property type="match status" value="1"/>
</dbReference>
<dbReference type="Pfam" id="PF00468">
    <property type="entry name" value="Ribosomal_L34"/>
    <property type="match status" value="1"/>
</dbReference>
<dbReference type="PROSITE" id="PS00784">
    <property type="entry name" value="RIBOSOMAL_L34"/>
    <property type="match status" value="1"/>
</dbReference>
<comment type="similarity">
    <text evidence="1">Belongs to the bacterial ribosomal protein bL34 family.</text>
</comment>
<accession>A2C404</accession>
<keyword id="KW-0687">Ribonucleoprotein</keyword>
<keyword id="KW-0689">Ribosomal protein</keyword>
<sequence length="45" mass="5416">MTKRTFGGTSRKRKRVSGFRVRMRSHTGRRVVRTRRKRGRSRLTV</sequence>
<reference key="1">
    <citation type="journal article" date="2007" name="PLoS Genet.">
        <title>Patterns and implications of gene gain and loss in the evolution of Prochlorococcus.</title>
        <authorList>
            <person name="Kettler G.C."/>
            <person name="Martiny A.C."/>
            <person name="Huang K."/>
            <person name="Zucker J."/>
            <person name="Coleman M.L."/>
            <person name="Rodrigue S."/>
            <person name="Chen F."/>
            <person name="Lapidus A."/>
            <person name="Ferriera S."/>
            <person name="Johnson J."/>
            <person name="Steglich C."/>
            <person name="Church G.M."/>
            <person name="Richardson P."/>
            <person name="Chisholm S.W."/>
        </authorList>
    </citation>
    <scope>NUCLEOTIDE SEQUENCE [LARGE SCALE GENOMIC DNA]</scope>
    <source>
        <strain>NATL1A</strain>
    </source>
</reference>
<evidence type="ECO:0000255" key="1">
    <source>
        <dbReference type="HAMAP-Rule" id="MF_00391"/>
    </source>
</evidence>
<evidence type="ECO:0000256" key="2">
    <source>
        <dbReference type="SAM" id="MobiDB-lite"/>
    </source>
</evidence>
<evidence type="ECO:0000305" key="3"/>
<name>RL34_PROM1</name>
<protein>
    <recommendedName>
        <fullName evidence="1">Large ribosomal subunit protein bL34</fullName>
    </recommendedName>
    <alternativeName>
        <fullName evidence="3">50S ribosomal protein L34</fullName>
    </alternativeName>
</protein>